<organism>
    <name type="scientific">Methanothrix thermoacetophila (strain DSM 6194 / JCM 14653 / NBRC 101360 / PT)</name>
    <name type="common">Methanosaeta thermophila</name>
    <dbReference type="NCBI Taxonomy" id="349307"/>
    <lineage>
        <taxon>Archaea</taxon>
        <taxon>Methanobacteriati</taxon>
        <taxon>Methanobacteriota</taxon>
        <taxon>Stenosarchaea group</taxon>
        <taxon>Methanomicrobia</taxon>
        <taxon>Methanotrichales</taxon>
        <taxon>Methanotrichaceae</taxon>
        <taxon>Methanothrix</taxon>
    </lineage>
</organism>
<accession>A0B9Q9</accession>
<reference key="1">
    <citation type="submission" date="2006-10" db="EMBL/GenBank/DDBJ databases">
        <title>Complete sequence of Methanosaeta thermophila PT.</title>
        <authorList>
            <consortium name="US DOE Joint Genome Institute"/>
            <person name="Copeland A."/>
            <person name="Lucas S."/>
            <person name="Lapidus A."/>
            <person name="Barry K."/>
            <person name="Detter J.C."/>
            <person name="Glavina del Rio T."/>
            <person name="Hammon N."/>
            <person name="Israni S."/>
            <person name="Pitluck S."/>
            <person name="Chain P."/>
            <person name="Malfatti S."/>
            <person name="Shin M."/>
            <person name="Vergez L."/>
            <person name="Schmutz J."/>
            <person name="Larimer F."/>
            <person name="Land M."/>
            <person name="Hauser L."/>
            <person name="Kyrpides N."/>
            <person name="Kim E."/>
            <person name="Smith K.S."/>
            <person name="Ingram-Smith C."/>
            <person name="Richardson P."/>
        </authorList>
    </citation>
    <scope>NUCLEOTIDE SEQUENCE [LARGE SCALE GENOMIC DNA]</scope>
    <source>
        <strain>DSM 6194 / JCM 14653 / NBRC 101360 / PT</strain>
    </source>
</reference>
<sequence length="174" mass="19504">MRITVLRLGHRPERDKRITTHVGLVARAFGADEILIEGRDESVVESLRDVVNRWGGSFSVTDGIAWRDELRRFRDSGGKIVHLTMYGRRIDEVIGEIRSCERIMVVVGAEKVPPDVYDIADWNVAVGNQPHSEVAALAVFLDRLFMGEELEKDFGGRLKVIPAARGKVVLDRGL</sequence>
<keyword id="KW-0963">Cytoplasm</keyword>
<keyword id="KW-0489">Methyltransferase</keyword>
<keyword id="KW-1185">Reference proteome</keyword>
<keyword id="KW-0949">S-adenosyl-L-methionine</keyword>
<keyword id="KW-0808">Transferase</keyword>
<keyword id="KW-0819">tRNA processing</keyword>
<comment type="function">
    <text evidence="1">Specifically catalyzes the AdoMet-dependent 2'-O-ribose methylation of cytidine at position 56 in tRNAs.</text>
</comment>
<comment type="catalytic activity">
    <reaction evidence="1">
        <text>cytidine(56) in tRNA + S-adenosyl-L-methionine = 2'-O-methylcytidine(56) in tRNA + S-adenosyl-L-homocysteine + H(+)</text>
        <dbReference type="Rhea" id="RHEA:42968"/>
        <dbReference type="Rhea" id="RHEA-COMP:10308"/>
        <dbReference type="Rhea" id="RHEA-COMP:10309"/>
        <dbReference type="ChEBI" id="CHEBI:15378"/>
        <dbReference type="ChEBI" id="CHEBI:57856"/>
        <dbReference type="ChEBI" id="CHEBI:59789"/>
        <dbReference type="ChEBI" id="CHEBI:74495"/>
        <dbReference type="ChEBI" id="CHEBI:82748"/>
        <dbReference type="EC" id="2.1.1.206"/>
    </reaction>
</comment>
<comment type="subunit">
    <text evidence="1">Homodimer.</text>
</comment>
<comment type="subcellular location">
    <subcellularLocation>
        <location evidence="1">Cytoplasm</location>
    </subcellularLocation>
</comment>
<comment type="similarity">
    <text evidence="1">Belongs to the aTrm56 family.</text>
</comment>
<evidence type="ECO:0000255" key="1">
    <source>
        <dbReference type="HAMAP-Rule" id="MF_00077"/>
    </source>
</evidence>
<proteinExistence type="inferred from homology"/>
<feature type="chain" id="PRO_0000365314" description="tRNA (cytidine(56)-2'-O)-methyltransferase">
    <location>
        <begin position="1"/>
        <end position="174"/>
    </location>
</feature>
<feature type="binding site" evidence="1">
    <location>
        <position position="83"/>
    </location>
    <ligand>
        <name>S-adenosyl-L-methionine</name>
        <dbReference type="ChEBI" id="CHEBI:59789"/>
    </ligand>
</feature>
<feature type="binding site" evidence="1">
    <location>
        <begin position="108"/>
        <end position="112"/>
    </location>
    <ligand>
        <name>S-adenosyl-L-methionine</name>
        <dbReference type="ChEBI" id="CHEBI:59789"/>
    </ligand>
</feature>
<feature type="binding site" evidence="1">
    <location>
        <begin position="126"/>
        <end position="133"/>
    </location>
    <ligand>
        <name>S-adenosyl-L-methionine</name>
        <dbReference type="ChEBI" id="CHEBI:59789"/>
    </ligand>
</feature>
<protein>
    <recommendedName>
        <fullName evidence="1">tRNA (cytidine(56)-2'-O)-methyltransferase</fullName>
        <ecNumber evidence="1">2.1.1.206</ecNumber>
    </recommendedName>
    <alternativeName>
        <fullName evidence="1">tRNA ribose 2'-O-methyltransferase aTrm56</fullName>
    </alternativeName>
</protein>
<dbReference type="EC" id="2.1.1.206" evidence="1"/>
<dbReference type="EMBL" id="CP000477">
    <property type="protein sequence ID" value="ABK15433.1"/>
    <property type="molecule type" value="Genomic_DNA"/>
</dbReference>
<dbReference type="RefSeq" id="WP_011696811.1">
    <property type="nucleotide sequence ID" value="NC_008553.1"/>
</dbReference>
<dbReference type="SMR" id="A0B9Q9"/>
<dbReference type="STRING" id="349307.Mthe_1667"/>
<dbReference type="GeneID" id="4463339"/>
<dbReference type="KEGG" id="mtp:Mthe_1667"/>
<dbReference type="HOGENOM" id="CLU_123709_0_0_2"/>
<dbReference type="OrthoDB" id="14397at2157"/>
<dbReference type="Proteomes" id="UP000000674">
    <property type="component" value="Chromosome"/>
</dbReference>
<dbReference type="GO" id="GO:0005737">
    <property type="term" value="C:cytoplasm"/>
    <property type="evidence" value="ECO:0007669"/>
    <property type="project" value="UniProtKB-SubCell"/>
</dbReference>
<dbReference type="GO" id="GO:0106059">
    <property type="term" value="F:tRNA (cytidine(56)-2'-O)-methyltransferase activity"/>
    <property type="evidence" value="ECO:0007669"/>
    <property type="project" value="UniProtKB-EC"/>
</dbReference>
<dbReference type="GO" id="GO:0002128">
    <property type="term" value="P:tRNA nucleoside ribose methylation"/>
    <property type="evidence" value="ECO:0007669"/>
    <property type="project" value="UniProtKB-UniRule"/>
</dbReference>
<dbReference type="CDD" id="cd18083">
    <property type="entry name" value="aTrm56-like"/>
    <property type="match status" value="1"/>
</dbReference>
<dbReference type="Gene3D" id="3.40.1280.10">
    <property type="match status" value="1"/>
</dbReference>
<dbReference type="HAMAP" id="MF_00077">
    <property type="entry name" value="tRNA_methyltr_aTrm56"/>
    <property type="match status" value="1"/>
</dbReference>
<dbReference type="InterPro" id="IPR029028">
    <property type="entry name" value="Alpha/beta_knot_MTases"/>
</dbReference>
<dbReference type="InterPro" id="IPR029026">
    <property type="entry name" value="tRNA_m1G_MTases_N"/>
</dbReference>
<dbReference type="InterPro" id="IPR002845">
    <property type="entry name" value="tRNA_mtfrase_aTrm56"/>
</dbReference>
<dbReference type="NCBIfam" id="NF003048">
    <property type="entry name" value="PRK03958.1"/>
    <property type="match status" value="1"/>
</dbReference>
<dbReference type="PANTHER" id="PTHR42197">
    <property type="entry name" value="TRNA (CYTIDINE(56)-2'-O)-METHYLTRANSFERASE"/>
    <property type="match status" value="1"/>
</dbReference>
<dbReference type="PANTHER" id="PTHR42197:SF1">
    <property type="entry name" value="TRNA (CYTIDINE(56)-2'-O)-METHYLTRANSFERASE"/>
    <property type="match status" value="1"/>
</dbReference>
<dbReference type="Pfam" id="PF01994">
    <property type="entry name" value="Trm56"/>
    <property type="match status" value="1"/>
</dbReference>
<dbReference type="PIRSF" id="PIRSF016123">
    <property type="entry name" value="UCP016123"/>
    <property type="match status" value="1"/>
</dbReference>
<dbReference type="SUPFAM" id="SSF75217">
    <property type="entry name" value="alpha/beta knot"/>
    <property type="match status" value="1"/>
</dbReference>
<gene>
    <name type="ordered locus">Mthe_1667</name>
</gene>
<name>TRM56_METTP</name>